<name>ADRB1_BOVIN</name>
<reference key="1">
    <citation type="submission" date="1999-09" db="EMBL/GenBank/DDBJ databases">
        <title>Cloning of beta adrenergic receptor from Korean cattle.</title>
        <authorList>
            <person name="Ha S.H."/>
            <person name="Baik M.G."/>
            <person name="Choi Y.J."/>
        </authorList>
    </citation>
    <scope>NUCLEOTIDE SEQUENCE [GENOMIC DNA]</scope>
</reference>
<reference key="2">
    <citation type="submission" date="1998-09" db="EMBL/GenBank/DDBJ databases">
        <title>Cloning and characterization of beta adrenergic receptor from Korean native cattle.</title>
        <authorList>
            <person name="Ha S.H."/>
        </authorList>
    </citation>
    <scope>NUCLEOTIDE SEQUENCE [GENOMIC DNA] OF 90-367</scope>
    <source>
        <strain>Korean</strain>
        <tissue>Adipocyte</tissue>
    </source>
</reference>
<sequence>MGAGVLALGASEPCNLSSAAPVPDGAATAARLLVPASPPASLLTSASEGPPLPSQQWTAGMGLLMAFIVLLIVVGNVLVLVAIAKTPRLQTLTNLFIMSLASADLVMGLLVVPFGATIVVWGRWEYGSFFCELWTSVDVLCVTASIETLCVIALDRYLAITSPFRYQSLLTRARARALVCTVWAISALVSFLPIFMQWWGDKDAKASRCYNDPECCDFIINEGYAITSSVVSFYVPLCIMAFVYLRVFREAQKQVKKIDSCERRFLSGPARLPSPAPSPGPPLPAATVANGRANKRRPPRLVALREQKALKTLGIIMGVFTLCWLPFFLANVVKAFHRDLVPDRLFVFFNWLGYANSAFNPIIYCRSPDFRKAFQRLLCCARRAACGSHAAAGDPPRALGCLAVARPSPSPGAASDDDDDDDEDDVGAAPPVRLLEPWAGYNGGAAANSDSSPDEPSRAGCASESKV</sequence>
<feature type="chain" id="PRO_0000069115" description="Beta-1 adrenergic receptor">
    <location>
        <begin position="1"/>
        <end position="467"/>
    </location>
</feature>
<feature type="topological domain" description="Extracellular" evidence="1">
    <location>
        <begin position="1"/>
        <end position="55"/>
    </location>
</feature>
<feature type="transmembrane region" description="Helical; Name=1" evidence="1">
    <location>
        <begin position="56"/>
        <end position="84"/>
    </location>
</feature>
<feature type="topological domain" description="Cytoplasmic" evidence="1">
    <location>
        <begin position="85"/>
        <end position="93"/>
    </location>
</feature>
<feature type="transmembrane region" description="Helical; Name=2" evidence="1">
    <location>
        <begin position="94"/>
        <end position="120"/>
    </location>
</feature>
<feature type="topological domain" description="Extracellular" evidence="1">
    <location>
        <begin position="121"/>
        <end position="132"/>
    </location>
</feature>
<feature type="transmembrane region" description="Helical; Name=3" evidence="1">
    <location>
        <begin position="133"/>
        <end position="154"/>
    </location>
</feature>
<feature type="topological domain" description="Cytoplasmic" evidence="1">
    <location>
        <begin position="155"/>
        <end position="172"/>
    </location>
</feature>
<feature type="transmembrane region" description="Helical; Name=4" evidence="1">
    <location>
        <begin position="173"/>
        <end position="196"/>
    </location>
</feature>
<feature type="topological domain" description="Extracellular" evidence="1">
    <location>
        <begin position="197"/>
        <end position="222"/>
    </location>
</feature>
<feature type="transmembrane region" description="Helical; Name=5" evidence="1">
    <location>
        <begin position="223"/>
        <end position="248"/>
    </location>
</feature>
<feature type="topological domain" description="Cytoplasmic" evidence="1">
    <location>
        <begin position="249"/>
        <end position="306"/>
    </location>
</feature>
<feature type="transmembrane region" description="Helical; Name=6" evidence="1">
    <location>
        <begin position="307"/>
        <end position="336"/>
    </location>
</feature>
<feature type="topological domain" description="Extracellular" evidence="1">
    <location>
        <begin position="337"/>
        <end position="341"/>
    </location>
</feature>
<feature type="transmembrane region" description="Helical; Name=7" evidence="1">
    <location>
        <begin position="342"/>
        <end position="364"/>
    </location>
</feature>
<feature type="topological domain" description="Cytoplasmic" evidence="1">
    <location>
        <begin position="365"/>
        <end position="467"/>
    </location>
</feature>
<feature type="region of interest" description="Disordered" evidence="7">
    <location>
        <begin position="269"/>
        <end position="290"/>
    </location>
</feature>
<feature type="region of interest" description="Disordered" evidence="7">
    <location>
        <begin position="408"/>
        <end position="467"/>
    </location>
</feature>
<feature type="short sequence motif" description="PDZ-Binding" evidence="1">
    <location>
        <begin position="464"/>
        <end position="467"/>
    </location>
</feature>
<feature type="compositionally biased region" description="Pro residues" evidence="7">
    <location>
        <begin position="272"/>
        <end position="284"/>
    </location>
</feature>
<feature type="compositionally biased region" description="Acidic residues" evidence="7">
    <location>
        <begin position="415"/>
        <end position="426"/>
    </location>
</feature>
<feature type="modified residue" description="Phosphoserine" evidence="3">
    <location>
        <position position="415"/>
    </location>
</feature>
<feature type="lipid moiety-binding region" description="S-palmitoyl cysteine" evidence="1">
    <location>
        <position position="380"/>
    </location>
</feature>
<feature type="glycosylation site" description="N-linked (GlcNAc...) asparagine" evidence="5">
    <location>
        <position position="15"/>
    </location>
</feature>
<feature type="disulfide bond" evidence="6">
    <location>
        <begin position="131"/>
        <end position="216"/>
    </location>
</feature>
<feature type="disulfide bond" evidence="6">
    <location>
        <begin position="209"/>
        <end position="215"/>
    </location>
</feature>
<feature type="sequence conflict" description="In Ref. 1; AAF21435." evidence="8" ref="1">
    <original>G</original>
    <variation>D</variation>
    <location>
        <position position="122"/>
    </location>
</feature>
<feature type="sequence conflict" description="In Ref. 1; AAF21435." evidence="8" ref="1">
    <original>R</original>
    <variation>H</variation>
    <location>
        <position position="156"/>
    </location>
</feature>
<feature type="sequence conflict" description="In Ref. 1; AAF21435." evidence="8" ref="1">
    <original>G</original>
    <variation>R</variation>
    <location>
        <position position="200"/>
    </location>
</feature>
<feature type="sequence conflict" description="In Ref. 1; AAF21435." evidence="8" ref="1">
    <original>R</original>
    <variation>G</variation>
    <location>
        <position position="208"/>
    </location>
</feature>
<feature type="sequence conflict" description="In Ref. 1; AAF21435." evidence="8" ref="1">
    <original>V</original>
    <variation>A</variation>
    <location>
        <position position="235"/>
    </location>
</feature>
<feature type="sequence conflict" description="In Ref. 1; AAF21435." evidence="8" ref="1">
    <original>P</original>
    <variation>S</variation>
    <location>
        <position position="299"/>
    </location>
</feature>
<accession>Q9TT96</accession>
<accession>Q9TUB4</accession>
<protein>
    <recommendedName>
        <fullName>Beta-1 adrenergic receptor</fullName>
    </recommendedName>
    <alternativeName>
        <fullName>Beta-1 adrenoreceptor</fullName>
        <shortName>Beta-1 adrenoceptor</shortName>
    </alternativeName>
</protein>
<keyword id="KW-1003">Cell membrane</keyword>
<keyword id="KW-1015">Disulfide bond</keyword>
<keyword id="KW-0967">Endosome</keyword>
<keyword id="KW-0297">G-protein coupled receptor</keyword>
<keyword id="KW-0325">Glycoprotein</keyword>
<keyword id="KW-0449">Lipoprotein</keyword>
<keyword id="KW-0472">Membrane</keyword>
<keyword id="KW-0564">Palmitate</keyword>
<keyword id="KW-0597">Phosphoprotein</keyword>
<keyword id="KW-0675">Receptor</keyword>
<keyword id="KW-1185">Reference proteome</keyword>
<keyword id="KW-0807">Transducer</keyword>
<keyword id="KW-0812">Transmembrane</keyword>
<keyword id="KW-1133">Transmembrane helix</keyword>
<comment type="function">
    <text evidence="2 4">Beta-adrenergic receptors mediate the catecholamine-induced activation of adenylate cyclase through the action of G proteins. This receptor binds epinephrine and norepinephrine with approximately equal affinity. Mediates Ras activation through G(s)-alpha- and cAMP-mediated signaling (By similarity). Involved in the regulation of sleep/wake behaviors (By similarity).</text>
</comment>
<comment type="subunit">
    <text evidence="2">Interacts (via C-terminus PDZ motif) with RAPGEF2; the interaction is direct. Interacts with GOPC, MAGI3 and DLG4 (By similarity).</text>
</comment>
<comment type="subcellular location">
    <subcellularLocation>
        <location evidence="3">Cell membrane</location>
        <topology evidence="3">Multi-pass membrane protein</topology>
    </subcellularLocation>
    <subcellularLocation>
        <location evidence="1">Early endosome</location>
    </subcellularLocation>
    <text evidence="1">Colocalizes with RAPGEF2 at the plasma membrane. Found in the Golgi upon GOPC overexpression (By similarity).</text>
</comment>
<comment type="domain">
    <text evidence="1">The PDZ domain-binding motif mediates competitive interactions with GOPC, MAGI3 and DLG4 and plays a role in subcellular location of the receptor.</text>
</comment>
<comment type="PTM">
    <text evidence="1">Homologous desensitization of the receptor is mediated by its phosphorylation by beta-adrenergic receptor kinase.</text>
</comment>
<comment type="similarity">
    <text evidence="6">Belongs to the G-protein coupled receptor 1 family. Adrenergic receptor subfamily. ADRB1 sub-subfamily.</text>
</comment>
<dbReference type="EMBL" id="AF188187">
    <property type="protein sequence ID" value="AAF21435.1"/>
    <property type="molecule type" value="Genomic_DNA"/>
</dbReference>
<dbReference type="EMBL" id="AF095852">
    <property type="protein sequence ID" value="AAF01674.1"/>
    <property type="molecule type" value="Genomic_DNA"/>
</dbReference>
<dbReference type="RefSeq" id="NP_919242.1">
    <property type="nucleotide sequence ID" value="NM_194266.1"/>
</dbReference>
<dbReference type="SMR" id="Q9TT96"/>
<dbReference type="CORUM" id="Q9TT96"/>
<dbReference type="FunCoup" id="Q9TT96">
    <property type="interactions" value="302"/>
</dbReference>
<dbReference type="STRING" id="9913.ENSBTAP00000001639"/>
<dbReference type="GlyCosmos" id="Q9TT96">
    <property type="glycosylation" value="1 site, No reported glycans"/>
</dbReference>
<dbReference type="GlyGen" id="Q9TT96">
    <property type="glycosylation" value="1 site"/>
</dbReference>
<dbReference type="PaxDb" id="9913-ENSBTAP00000001639"/>
<dbReference type="GeneID" id="281604"/>
<dbReference type="KEGG" id="bta:281604"/>
<dbReference type="CTD" id="153"/>
<dbReference type="eggNOG" id="KOG3656">
    <property type="taxonomic scope" value="Eukaryota"/>
</dbReference>
<dbReference type="InParanoid" id="Q9TT96"/>
<dbReference type="OrthoDB" id="5975661at2759"/>
<dbReference type="Proteomes" id="UP000009136">
    <property type="component" value="Unplaced"/>
</dbReference>
<dbReference type="GO" id="GO:0005769">
    <property type="term" value="C:early endosome"/>
    <property type="evidence" value="ECO:0000250"/>
    <property type="project" value="UniProtKB"/>
</dbReference>
<dbReference type="GO" id="GO:0005886">
    <property type="term" value="C:plasma membrane"/>
    <property type="evidence" value="ECO:0000250"/>
    <property type="project" value="UniProtKB"/>
</dbReference>
<dbReference type="GO" id="GO:0004940">
    <property type="term" value="F:beta1-adrenergic receptor activity"/>
    <property type="evidence" value="ECO:0000250"/>
    <property type="project" value="UniProtKB"/>
</dbReference>
<dbReference type="GO" id="GO:0071880">
    <property type="term" value="P:adenylate cyclase-activating adrenergic receptor signaling pathway"/>
    <property type="evidence" value="ECO:0000250"/>
    <property type="project" value="UniProtKB"/>
</dbReference>
<dbReference type="GO" id="GO:0002025">
    <property type="term" value="P:norepinephrine-epinephrine-mediated vasodilation involved in regulation of systemic arterial blood pressure"/>
    <property type="evidence" value="ECO:0000318"/>
    <property type="project" value="GO_Central"/>
</dbReference>
<dbReference type="GO" id="GO:0045823">
    <property type="term" value="P:positive regulation of heart contraction"/>
    <property type="evidence" value="ECO:0007669"/>
    <property type="project" value="InterPro"/>
</dbReference>
<dbReference type="GO" id="GO:0043410">
    <property type="term" value="P:positive regulation of MAPK cascade"/>
    <property type="evidence" value="ECO:0000318"/>
    <property type="project" value="GO_Central"/>
</dbReference>
<dbReference type="GO" id="GO:0045187">
    <property type="term" value="P:regulation of circadian sleep/wake cycle, sleep"/>
    <property type="evidence" value="ECO:0000250"/>
    <property type="project" value="UniProtKB"/>
</dbReference>
<dbReference type="CDD" id="cd15958">
    <property type="entry name" value="7tmA_Beta1_AR"/>
    <property type="match status" value="1"/>
</dbReference>
<dbReference type="FunFam" id="1.20.1070.10:FF:000057">
    <property type="entry name" value="Beta-1 adrenergic receptor"/>
    <property type="match status" value="1"/>
</dbReference>
<dbReference type="Gene3D" id="1.20.1070.10">
    <property type="entry name" value="Rhodopsin 7-helix transmembrane proteins"/>
    <property type="match status" value="1"/>
</dbReference>
<dbReference type="InterPro" id="IPR002233">
    <property type="entry name" value="ADR_fam"/>
</dbReference>
<dbReference type="InterPro" id="IPR000507">
    <property type="entry name" value="ADRB1_rcpt"/>
</dbReference>
<dbReference type="InterPro" id="IPR000276">
    <property type="entry name" value="GPCR_Rhodpsn"/>
</dbReference>
<dbReference type="InterPro" id="IPR017452">
    <property type="entry name" value="GPCR_Rhodpsn_7TM"/>
</dbReference>
<dbReference type="PANTHER" id="PTHR24248">
    <property type="entry name" value="ADRENERGIC RECEPTOR-RELATED G-PROTEIN COUPLED RECEPTOR"/>
    <property type="match status" value="1"/>
</dbReference>
<dbReference type="PANTHER" id="PTHR24248:SF54">
    <property type="entry name" value="BETA-1 ADRENERGIC RECEPTOR"/>
    <property type="match status" value="1"/>
</dbReference>
<dbReference type="Pfam" id="PF00001">
    <property type="entry name" value="7tm_1"/>
    <property type="match status" value="1"/>
</dbReference>
<dbReference type="PRINTS" id="PR01103">
    <property type="entry name" value="ADRENERGICR"/>
</dbReference>
<dbReference type="PRINTS" id="PR00561">
    <property type="entry name" value="ADRENRGCB1AR"/>
</dbReference>
<dbReference type="PRINTS" id="PR00237">
    <property type="entry name" value="GPCRRHODOPSN"/>
</dbReference>
<dbReference type="SMART" id="SM01381">
    <property type="entry name" value="7TM_GPCR_Srsx"/>
    <property type="match status" value="1"/>
</dbReference>
<dbReference type="SUPFAM" id="SSF81321">
    <property type="entry name" value="Family A G protein-coupled receptor-like"/>
    <property type="match status" value="1"/>
</dbReference>
<dbReference type="PROSITE" id="PS00237">
    <property type="entry name" value="G_PROTEIN_RECEP_F1_1"/>
    <property type="match status" value="1"/>
</dbReference>
<dbReference type="PROSITE" id="PS50262">
    <property type="entry name" value="G_PROTEIN_RECEP_F1_2"/>
    <property type="match status" value="1"/>
</dbReference>
<proteinExistence type="inferred from homology"/>
<organism>
    <name type="scientific">Bos taurus</name>
    <name type="common">Bovine</name>
    <dbReference type="NCBI Taxonomy" id="9913"/>
    <lineage>
        <taxon>Eukaryota</taxon>
        <taxon>Metazoa</taxon>
        <taxon>Chordata</taxon>
        <taxon>Craniata</taxon>
        <taxon>Vertebrata</taxon>
        <taxon>Euteleostomi</taxon>
        <taxon>Mammalia</taxon>
        <taxon>Eutheria</taxon>
        <taxon>Laurasiatheria</taxon>
        <taxon>Artiodactyla</taxon>
        <taxon>Ruminantia</taxon>
        <taxon>Pecora</taxon>
        <taxon>Bovidae</taxon>
        <taxon>Bovinae</taxon>
        <taxon>Bos</taxon>
    </lineage>
</organism>
<gene>
    <name type="primary">ADRB1</name>
</gene>
<evidence type="ECO:0000250" key="1"/>
<evidence type="ECO:0000250" key="2">
    <source>
        <dbReference type="UniProtKB" id="P08588"/>
    </source>
</evidence>
<evidence type="ECO:0000250" key="3">
    <source>
        <dbReference type="UniProtKB" id="P18090"/>
    </source>
</evidence>
<evidence type="ECO:0000250" key="4">
    <source>
        <dbReference type="UniProtKB" id="P34971"/>
    </source>
</evidence>
<evidence type="ECO:0000255" key="5"/>
<evidence type="ECO:0000255" key="6">
    <source>
        <dbReference type="PROSITE-ProRule" id="PRU00521"/>
    </source>
</evidence>
<evidence type="ECO:0000256" key="7">
    <source>
        <dbReference type="SAM" id="MobiDB-lite"/>
    </source>
</evidence>
<evidence type="ECO:0000305" key="8"/>